<dbReference type="EC" id="2.7.7.6" evidence="1"/>
<dbReference type="EMBL" id="CP000438">
    <property type="protein sequence ID" value="ABJ13540.1"/>
    <property type="molecule type" value="Genomic_DNA"/>
</dbReference>
<dbReference type="RefSeq" id="WP_003093745.1">
    <property type="nucleotide sequence ID" value="NZ_CP034244.1"/>
</dbReference>
<dbReference type="SMR" id="Q02T86"/>
<dbReference type="KEGG" id="pau:PA14_08780"/>
<dbReference type="PseudoCAP" id="PA14_08780"/>
<dbReference type="HOGENOM" id="CLU_000524_3_1_6"/>
<dbReference type="BioCyc" id="PAER208963:G1G74-730-MONOMER"/>
<dbReference type="Proteomes" id="UP000000653">
    <property type="component" value="Chromosome"/>
</dbReference>
<dbReference type="GO" id="GO:0000428">
    <property type="term" value="C:DNA-directed RNA polymerase complex"/>
    <property type="evidence" value="ECO:0007669"/>
    <property type="project" value="UniProtKB-KW"/>
</dbReference>
<dbReference type="GO" id="GO:0003677">
    <property type="term" value="F:DNA binding"/>
    <property type="evidence" value="ECO:0007669"/>
    <property type="project" value="UniProtKB-UniRule"/>
</dbReference>
<dbReference type="GO" id="GO:0003899">
    <property type="term" value="F:DNA-directed RNA polymerase activity"/>
    <property type="evidence" value="ECO:0007669"/>
    <property type="project" value="UniProtKB-UniRule"/>
</dbReference>
<dbReference type="GO" id="GO:0000287">
    <property type="term" value="F:magnesium ion binding"/>
    <property type="evidence" value="ECO:0007669"/>
    <property type="project" value="UniProtKB-UniRule"/>
</dbReference>
<dbReference type="GO" id="GO:0008270">
    <property type="term" value="F:zinc ion binding"/>
    <property type="evidence" value="ECO:0007669"/>
    <property type="project" value="UniProtKB-UniRule"/>
</dbReference>
<dbReference type="GO" id="GO:0006351">
    <property type="term" value="P:DNA-templated transcription"/>
    <property type="evidence" value="ECO:0007669"/>
    <property type="project" value="UniProtKB-UniRule"/>
</dbReference>
<dbReference type="CDD" id="cd02655">
    <property type="entry name" value="RNAP_beta'_C"/>
    <property type="match status" value="1"/>
</dbReference>
<dbReference type="CDD" id="cd01609">
    <property type="entry name" value="RNAP_beta'_N"/>
    <property type="match status" value="1"/>
</dbReference>
<dbReference type="FunFam" id="1.10.132.30:FF:000003">
    <property type="entry name" value="DNA-directed RNA polymerase subunit beta"/>
    <property type="match status" value="1"/>
</dbReference>
<dbReference type="FunFam" id="1.10.150.390:FF:000002">
    <property type="entry name" value="DNA-directed RNA polymerase subunit beta"/>
    <property type="match status" value="1"/>
</dbReference>
<dbReference type="FunFam" id="1.10.40.90:FF:000001">
    <property type="entry name" value="DNA-directed RNA polymerase subunit beta"/>
    <property type="match status" value="1"/>
</dbReference>
<dbReference type="FunFam" id="4.10.860.120:FF:000001">
    <property type="entry name" value="DNA-directed RNA polymerase subunit beta"/>
    <property type="match status" value="1"/>
</dbReference>
<dbReference type="Gene3D" id="1.10.132.30">
    <property type="match status" value="1"/>
</dbReference>
<dbReference type="Gene3D" id="1.10.150.390">
    <property type="match status" value="1"/>
</dbReference>
<dbReference type="Gene3D" id="1.10.1790.20">
    <property type="match status" value="1"/>
</dbReference>
<dbReference type="Gene3D" id="1.10.40.90">
    <property type="match status" value="1"/>
</dbReference>
<dbReference type="Gene3D" id="2.40.40.20">
    <property type="match status" value="1"/>
</dbReference>
<dbReference type="Gene3D" id="2.40.50.100">
    <property type="match status" value="3"/>
</dbReference>
<dbReference type="Gene3D" id="4.10.860.120">
    <property type="entry name" value="RNA polymerase II, clamp domain"/>
    <property type="match status" value="1"/>
</dbReference>
<dbReference type="Gene3D" id="1.10.274.100">
    <property type="entry name" value="RNA polymerase Rpb1, domain 3"/>
    <property type="match status" value="1"/>
</dbReference>
<dbReference type="HAMAP" id="MF_01322">
    <property type="entry name" value="RNApol_bact_RpoC"/>
    <property type="match status" value="1"/>
</dbReference>
<dbReference type="InterPro" id="IPR045867">
    <property type="entry name" value="DNA-dir_RpoC_beta_prime"/>
</dbReference>
<dbReference type="InterPro" id="IPR012754">
    <property type="entry name" value="DNA-dir_RpoC_beta_prime_bact"/>
</dbReference>
<dbReference type="InterPro" id="IPR000722">
    <property type="entry name" value="RNA_pol_asu"/>
</dbReference>
<dbReference type="InterPro" id="IPR006592">
    <property type="entry name" value="RNA_pol_N"/>
</dbReference>
<dbReference type="InterPro" id="IPR007080">
    <property type="entry name" value="RNA_pol_Rpb1_1"/>
</dbReference>
<dbReference type="InterPro" id="IPR007066">
    <property type="entry name" value="RNA_pol_Rpb1_3"/>
</dbReference>
<dbReference type="InterPro" id="IPR042102">
    <property type="entry name" value="RNA_pol_Rpb1_3_sf"/>
</dbReference>
<dbReference type="InterPro" id="IPR007083">
    <property type="entry name" value="RNA_pol_Rpb1_4"/>
</dbReference>
<dbReference type="InterPro" id="IPR007081">
    <property type="entry name" value="RNA_pol_Rpb1_5"/>
</dbReference>
<dbReference type="InterPro" id="IPR044893">
    <property type="entry name" value="RNA_pol_Rpb1_clamp_domain"/>
</dbReference>
<dbReference type="InterPro" id="IPR038120">
    <property type="entry name" value="Rpb1_funnel_sf"/>
</dbReference>
<dbReference type="NCBIfam" id="TIGR02386">
    <property type="entry name" value="rpoC_TIGR"/>
    <property type="match status" value="1"/>
</dbReference>
<dbReference type="PANTHER" id="PTHR19376">
    <property type="entry name" value="DNA-DIRECTED RNA POLYMERASE"/>
    <property type="match status" value="1"/>
</dbReference>
<dbReference type="PANTHER" id="PTHR19376:SF54">
    <property type="entry name" value="DNA-DIRECTED RNA POLYMERASE SUBUNIT BETA"/>
    <property type="match status" value="1"/>
</dbReference>
<dbReference type="Pfam" id="PF04997">
    <property type="entry name" value="RNA_pol_Rpb1_1"/>
    <property type="match status" value="1"/>
</dbReference>
<dbReference type="Pfam" id="PF00623">
    <property type="entry name" value="RNA_pol_Rpb1_2"/>
    <property type="match status" value="2"/>
</dbReference>
<dbReference type="Pfam" id="PF04983">
    <property type="entry name" value="RNA_pol_Rpb1_3"/>
    <property type="match status" value="1"/>
</dbReference>
<dbReference type="Pfam" id="PF05000">
    <property type="entry name" value="RNA_pol_Rpb1_4"/>
    <property type="match status" value="1"/>
</dbReference>
<dbReference type="Pfam" id="PF04998">
    <property type="entry name" value="RNA_pol_Rpb1_5"/>
    <property type="match status" value="1"/>
</dbReference>
<dbReference type="SMART" id="SM00663">
    <property type="entry name" value="RPOLA_N"/>
    <property type="match status" value="1"/>
</dbReference>
<dbReference type="SUPFAM" id="SSF64484">
    <property type="entry name" value="beta and beta-prime subunits of DNA dependent RNA-polymerase"/>
    <property type="match status" value="1"/>
</dbReference>
<name>RPOC_PSEAB</name>
<gene>
    <name evidence="1" type="primary">rpoC</name>
    <name type="ordered locus">PA14_08780</name>
</gene>
<organism>
    <name type="scientific">Pseudomonas aeruginosa (strain UCBPP-PA14)</name>
    <dbReference type="NCBI Taxonomy" id="208963"/>
    <lineage>
        <taxon>Bacteria</taxon>
        <taxon>Pseudomonadati</taxon>
        <taxon>Pseudomonadota</taxon>
        <taxon>Gammaproteobacteria</taxon>
        <taxon>Pseudomonadales</taxon>
        <taxon>Pseudomonadaceae</taxon>
        <taxon>Pseudomonas</taxon>
    </lineage>
</organism>
<sequence length="1399" mass="154383">MKDLLNLLKNQGQIEEFDAIRIGLASPEMIRSWSFGEVKKPETINYRTFKPERDGLFCAKIFGPVKDYECLCGKYKRLKHRGVICEKCGVEVALAKVRRERMGHIELASPVAHIWFLKSLPSRIGLLLDMTLRDIERVLYFESYVVIDPGMTTLEKGQLLNDEQYFEALEEFGDDFDARMGAEAVHELLNAIDLEHEIGRLREEIPQTNSETKIKKLSKRLKLMEAFQGSGNKPEWMVLTVLPVLPPDLRPLVPLDGGRFATSDLNDLYRRVINRNNRLKRLLDLAAPDIIVRNEKRMLQEAVDALLDNGRRGRAITGSNKRPLKSLADMIKGKQGRFRQNLLGKRVDYSGRSVITVGPTLRLHQCGLPKKMALELFKPFIFGKLEGRGMATTIKAAKKMVERELPEVWDVLAEVIREHPVLLNRAPTLHRLGIQAFEPVLIEGKAIQLHPLVCAAYNADFDGDQMAVHVPLTLEAQLEARALMMSTNNILSPANGEPIIVPSQDVVMGLYYMTREAINAKGEGMAFADLQEVDRAYRSGQASLHARVKVRINEKIKGEDGQLTANTRIVDTTVGRALLFQVVPAGLPFDVVNQSMKKKAISKLINHCYRVVGLKDTVIFADQLMYTGFAYSTISGVSIGVNDFVIPDEKARIINAATDEVKEIESQYASGLVTQGEKYNKVIDLWSKANDEVSKAMMANLSKEKVVDREGKEVDQESFNSMYMMADSGARGSAAQIRQLAGMRGLMAKPDGSIIETPITANFREGLNVLQYFISTHGARKGLADTALKTANSGYLTRRLVDVAQDLVVTEIDCGTEHGLLMSPHIEGGDVVEPLGERVLGRVIARDVFKPGSDEVIVPAGTLIDEKWVDFLEVMSVDEVVVRSPITCETRHGICAMCYGRDLARGHRVNIGEAVGVIAAQSIGEPGTQLTMRTFHIGGAASRTSAADNVQVKNGGTIRLHNLKHVVRADGALVAVSRSGELAVADDFGRERERYKLPYGAVISVKEGDKVDPGAIVAKWDPHTHPIVTEVDGTVAFVGMEEGITVKRQTDELTGLTNIEVMDPKDRPAAGKDIRPAVKLIDAAGKDLLLPGTDVPAQYFLPANALVNLTDGAKVSIGDVVARIPQETSKTRDITGGLPRVADLFEARRPKEPSILAEISGTISFGKETKGKRRLVITPNDGSDPYEELIPKWRHLNVFEGEQVNRGEVISDGPSNPHDILRLLGVSSLAKYIVNEIQDVYRLQGVKINDKHIETILRQMLRKVEVSESGDSSFIKGDQVELTQVLEENEQLGTEDKFPAKYERVLLGITKASLSTESFISAASFQETTRVLTEAAVTGKRDFLRGLKENVVVGRLIPAGTGLAYHSERKRQRDLGKPQRVSASEAEAALTEALNSSGN</sequence>
<protein>
    <recommendedName>
        <fullName evidence="1">DNA-directed RNA polymerase subunit beta'</fullName>
        <shortName evidence="1">RNAP subunit beta'</shortName>
        <ecNumber evidence="1">2.7.7.6</ecNumber>
    </recommendedName>
    <alternativeName>
        <fullName evidence="1">RNA polymerase subunit beta'</fullName>
    </alternativeName>
    <alternativeName>
        <fullName evidence="1">Transcriptase subunit beta'</fullName>
    </alternativeName>
</protein>
<evidence type="ECO:0000255" key="1">
    <source>
        <dbReference type="HAMAP-Rule" id="MF_01322"/>
    </source>
</evidence>
<evidence type="ECO:0000256" key="2">
    <source>
        <dbReference type="SAM" id="MobiDB-lite"/>
    </source>
</evidence>
<feature type="chain" id="PRO_0000353411" description="DNA-directed RNA polymerase subunit beta'">
    <location>
        <begin position="1"/>
        <end position="1399"/>
    </location>
</feature>
<feature type="region of interest" description="Disordered" evidence="2">
    <location>
        <begin position="1367"/>
        <end position="1399"/>
    </location>
</feature>
<feature type="compositionally biased region" description="Low complexity" evidence="2">
    <location>
        <begin position="1382"/>
        <end position="1399"/>
    </location>
</feature>
<feature type="binding site" evidence="1">
    <location>
        <position position="70"/>
    </location>
    <ligand>
        <name>Zn(2+)</name>
        <dbReference type="ChEBI" id="CHEBI:29105"/>
        <label>1</label>
    </ligand>
</feature>
<feature type="binding site" evidence="1">
    <location>
        <position position="72"/>
    </location>
    <ligand>
        <name>Zn(2+)</name>
        <dbReference type="ChEBI" id="CHEBI:29105"/>
        <label>1</label>
    </ligand>
</feature>
<feature type="binding site" evidence="1">
    <location>
        <position position="85"/>
    </location>
    <ligand>
        <name>Zn(2+)</name>
        <dbReference type="ChEBI" id="CHEBI:29105"/>
        <label>1</label>
    </ligand>
</feature>
<feature type="binding site" evidence="1">
    <location>
        <position position="88"/>
    </location>
    <ligand>
        <name>Zn(2+)</name>
        <dbReference type="ChEBI" id="CHEBI:29105"/>
        <label>1</label>
    </ligand>
</feature>
<feature type="binding site" evidence="1">
    <location>
        <position position="460"/>
    </location>
    <ligand>
        <name>Mg(2+)</name>
        <dbReference type="ChEBI" id="CHEBI:18420"/>
    </ligand>
</feature>
<feature type="binding site" evidence="1">
    <location>
        <position position="462"/>
    </location>
    <ligand>
        <name>Mg(2+)</name>
        <dbReference type="ChEBI" id="CHEBI:18420"/>
    </ligand>
</feature>
<feature type="binding site" evidence="1">
    <location>
        <position position="464"/>
    </location>
    <ligand>
        <name>Mg(2+)</name>
        <dbReference type="ChEBI" id="CHEBI:18420"/>
    </ligand>
</feature>
<feature type="binding site" evidence="1">
    <location>
        <position position="814"/>
    </location>
    <ligand>
        <name>Zn(2+)</name>
        <dbReference type="ChEBI" id="CHEBI:29105"/>
        <label>2</label>
    </ligand>
</feature>
<feature type="binding site" evidence="1">
    <location>
        <position position="888"/>
    </location>
    <ligand>
        <name>Zn(2+)</name>
        <dbReference type="ChEBI" id="CHEBI:29105"/>
        <label>2</label>
    </ligand>
</feature>
<feature type="binding site" evidence="1">
    <location>
        <position position="895"/>
    </location>
    <ligand>
        <name>Zn(2+)</name>
        <dbReference type="ChEBI" id="CHEBI:29105"/>
        <label>2</label>
    </ligand>
</feature>
<feature type="binding site" evidence="1">
    <location>
        <position position="898"/>
    </location>
    <ligand>
        <name>Zn(2+)</name>
        <dbReference type="ChEBI" id="CHEBI:29105"/>
        <label>2</label>
    </ligand>
</feature>
<reference key="1">
    <citation type="journal article" date="2006" name="Genome Biol.">
        <title>Genomic analysis reveals that Pseudomonas aeruginosa virulence is combinatorial.</title>
        <authorList>
            <person name="Lee D.G."/>
            <person name="Urbach J.M."/>
            <person name="Wu G."/>
            <person name="Liberati N.T."/>
            <person name="Feinbaum R.L."/>
            <person name="Miyata S."/>
            <person name="Diggins L.T."/>
            <person name="He J."/>
            <person name="Saucier M."/>
            <person name="Deziel E."/>
            <person name="Friedman L."/>
            <person name="Li L."/>
            <person name="Grills G."/>
            <person name="Montgomery K."/>
            <person name="Kucherlapati R."/>
            <person name="Rahme L.G."/>
            <person name="Ausubel F.M."/>
        </authorList>
    </citation>
    <scope>NUCLEOTIDE SEQUENCE [LARGE SCALE GENOMIC DNA]</scope>
    <source>
        <strain>UCBPP-PA14</strain>
    </source>
</reference>
<proteinExistence type="inferred from homology"/>
<comment type="function">
    <text evidence="1">DNA-dependent RNA polymerase catalyzes the transcription of DNA into RNA using the four ribonucleoside triphosphates as substrates.</text>
</comment>
<comment type="catalytic activity">
    <reaction evidence="1">
        <text>RNA(n) + a ribonucleoside 5'-triphosphate = RNA(n+1) + diphosphate</text>
        <dbReference type="Rhea" id="RHEA:21248"/>
        <dbReference type="Rhea" id="RHEA-COMP:14527"/>
        <dbReference type="Rhea" id="RHEA-COMP:17342"/>
        <dbReference type="ChEBI" id="CHEBI:33019"/>
        <dbReference type="ChEBI" id="CHEBI:61557"/>
        <dbReference type="ChEBI" id="CHEBI:140395"/>
        <dbReference type="EC" id="2.7.7.6"/>
    </reaction>
</comment>
<comment type="cofactor">
    <cofactor evidence="1">
        <name>Mg(2+)</name>
        <dbReference type="ChEBI" id="CHEBI:18420"/>
    </cofactor>
    <text evidence="1">Binds 1 Mg(2+) ion per subunit.</text>
</comment>
<comment type="cofactor">
    <cofactor evidence="1">
        <name>Zn(2+)</name>
        <dbReference type="ChEBI" id="CHEBI:29105"/>
    </cofactor>
    <text evidence="1">Binds 2 Zn(2+) ions per subunit.</text>
</comment>
<comment type="subunit">
    <text evidence="1">The RNAP catalytic core consists of 2 alpha, 1 beta, 1 beta' and 1 omega subunit. When a sigma factor is associated with the core the holoenzyme is formed, which can initiate transcription.</text>
</comment>
<comment type="similarity">
    <text evidence="1">Belongs to the RNA polymerase beta' chain family.</text>
</comment>
<accession>Q02T86</accession>
<keyword id="KW-0240">DNA-directed RNA polymerase</keyword>
<keyword id="KW-0460">Magnesium</keyword>
<keyword id="KW-0479">Metal-binding</keyword>
<keyword id="KW-0548">Nucleotidyltransferase</keyword>
<keyword id="KW-0804">Transcription</keyword>
<keyword id="KW-0808">Transferase</keyword>
<keyword id="KW-0862">Zinc</keyword>